<dbReference type="EMBL" id="L20758">
    <property type="protein sequence ID" value="AAA16050.1"/>
    <property type="molecule type" value="Unassigned_DNA"/>
</dbReference>
<dbReference type="EMBL" id="Z22646">
    <property type="protein sequence ID" value="CAA80362.1"/>
    <property type="molecule type" value="Genomic_DNA"/>
</dbReference>
<dbReference type="EMBL" id="AL591985">
    <property type="protein sequence ID" value="CAC49474.1"/>
    <property type="molecule type" value="Genomic_DNA"/>
</dbReference>
<dbReference type="PIR" id="B95976">
    <property type="entry name" value="B95976"/>
</dbReference>
<dbReference type="PIR" id="C49349">
    <property type="entry name" value="C49349"/>
</dbReference>
<dbReference type="RefSeq" id="NP_437614.1">
    <property type="nucleotide sequence ID" value="NC_003078.1"/>
</dbReference>
<dbReference type="RefSeq" id="WP_010975911.1">
    <property type="nucleotide sequence ID" value="NC_003078.1"/>
</dbReference>
<dbReference type="SMR" id="P33699"/>
<dbReference type="TCDB" id="2.A.66.2.2">
    <property type="family name" value="the multidrug/oligosaccharidyl-lipid/polysaccharide (mop) flippase superfamily"/>
</dbReference>
<dbReference type="EnsemblBacteria" id="CAC49474">
    <property type="protein sequence ID" value="CAC49474"/>
    <property type="gene ID" value="SM_b20950"/>
</dbReference>
<dbReference type="KEGG" id="sme:SM_b20950"/>
<dbReference type="PATRIC" id="fig|266834.11.peg.6003"/>
<dbReference type="eggNOG" id="COG2244">
    <property type="taxonomic scope" value="Bacteria"/>
</dbReference>
<dbReference type="HOGENOM" id="CLU_026911_3_1_5"/>
<dbReference type="OrthoDB" id="7605542at2"/>
<dbReference type="BioCyc" id="MetaCyc:SM_B20950-MONOMER"/>
<dbReference type="UniPathway" id="UPA00631"/>
<dbReference type="Proteomes" id="UP000001976">
    <property type="component" value="Plasmid pSymB"/>
</dbReference>
<dbReference type="GO" id="GO:0005886">
    <property type="term" value="C:plasma membrane"/>
    <property type="evidence" value="ECO:0007669"/>
    <property type="project" value="UniProtKB-SubCell"/>
</dbReference>
<dbReference type="GO" id="GO:0000271">
    <property type="term" value="P:polysaccharide biosynthetic process"/>
    <property type="evidence" value="ECO:0007669"/>
    <property type="project" value="UniProtKB-KW"/>
</dbReference>
<dbReference type="CDD" id="cd13127">
    <property type="entry name" value="MATE_tuaB_like"/>
    <property type="match status" value="1"/>
</dbReference>
<dbReference type="InterPro" id="IPR050833">
    <property type="entry name" value="Poly_Biosynth_Transport"/>
</dbReference>
<dbReference type="InterPro" id="IPR002797">
    <property type="entry name" value="Polysacc_synth"/>
</dbReference>
<dbReference type="PANTHER" id="PTHR30250:SF10">
    <property type="entry name" value="LIPOPOLYSACCHARIDE BIOSYNTHESIS PROTEIN WZXC"/>
    <property type="match status" value="1"/>
</dbReference>
<dbReference type="PANTHER" id="PTHR30250">
    <property type="entry name" value="PST FAMILY PREDICTED COLANIC ACID TRANSPORTER"/>
    <property type="match status" value="1"/>
</dbReference>
<dbReference type="Pfam" id="PF01943">
    <property type="entry name" value="Polysacc_synt"/>
    <property type="match status" value="1"/>
</dbReference>
<proteinExistence type="inferred from homology"/>
<geneLocation type="plasmid">
    <name>pSymB</name>
    <name>megaplasmid 2</name>
</geneLocation>
<reference key="1">
    <citation type="journal article" date="1993" name="J. Bacteriol.">
        <title>Family of glycosyl transferases needed for the synthesis of succinoglycan by Rhizobium meliloti.</title>
        <authorList>
            <person name="Glucksmann M.A."/>
            <person name="Reuber T.L."/>
            <person name="Walker G.C."/>
        </authorList>
    </citation>
    <scope>NUCLEOTIDE SEQUENCE [GENOMIC DNA]</scope>
    <source>
        <strain>1021</strain>
    </source>
</reference>
<reference key="2">
    <citation type="journal article" date="1993" name="J. Bacteriol.">
        <title>Genes needed for the modification, polymerization, export, and processing of succinoglycan by Rhizobium meliloti: a model for succinoglycan biosynthesis.</title>
        <authorList>
            <person name="Glucksmann M.A."/>
            <person name="Reuber T.L."/>
            <person name="Walker G.C."/>
        </authorList>
    </citation>
    <scope>NUCLEOTIDE SEQUENCE [GENOMIC DNA]</scope>
    <source>
        <strain>1021</strain>
    </source>
</reference>
<reference key="3">
    <citation type="journal article" date="1993" name="Mol. Plant Microbe Interact.">
        <title>Analysis of the Rhizobium meliloti genes exoU, exoV, exoW, exoT, and exoI involved in exopolysaccharide biosynthesis and nodule invasion: exoU and exoW probably encode glucosyltransferases.</title>
        <authorList>
            <person name="Becker A."/>
            <person name="Kleickmann A."/>
            <person name="Kuester H."/>
            <person name="Keller M."/>
            <person name="Arnold W."/>
            <person name="Puehler A."/>
        </authorList>
    </citation>
    <scope>NUCLEOTIDE SEQUENCE [GENOMIC DNA]</scope>
    <source>
        <strain>RCR2011 / SU47</strain>
    </source>
</reference>
<reference key="4">
    <citation type="journal article" date="2001" name="Proc. Natl. Acad. Sci. U.S.A.">
        <title>The complete sequence of the 1,683-kb pSymB megaplasmid from the N2-fixing endosymbiont Sinorhizobium meliloti.</title>
        <authorList>
            <person name="Finan T.M."/>
            <person name="Weidner S."/>
            <person name="Wong K."/>
            <person name="Buhrmester J."/>
            <person name="Chain P."/>
            <person name="Vorhoelter F.J."/>
            <person name="Hernandez-Lucas I."/>
            <person name="Becker A."/>
            <person name="Cowie A."/>
            <person name="Gouzy J."/>
            <person name="Golding B."/>
            <person name="Puehler A."/>
        </authorList>
    </citation>
    <scope>NUCLEOTIDE SEQUENCE [LARGE SCALE GENOMIC DNA]</scope>
    <source>
        <strain>1021</strain>
    </source>
</reference>
<reference key="5">
    <citation type="journal article" date="2001" name="Science">
        <title>The composite genome of the legume symbiont Sinorhizobium meliloti.</title>
        <authorList>
            <person name="Galibert F."/>
            <person name="Finan T.M."/>
            <person name="Long S.R."/>
            <person name="Puehler A."/>
            <person name="Abola P."/>
            <person name="Ampe F."/>
            <person name="Barloy-Hubler F."/>
            <person name="Barnett M.J."/>
            <person name="Becker A."/>
            <person name="Boistard P."/>
            <person name="Bothe G."/>
            <person name="Boutry M."/>
            <person name="Bowser L."/>
            <person name="Buhrmester J."/>
            <person name="Cadieu E."/>
            <person name="Capela D."/>
            <person name="Chain P."/>
            <person name="Cowie A."/>
            <person name="Davis R.W."/>
            <person name="Dreano S."/>
            <person name="Federspiel N.A."/>
            <person name="Fisher R.F."/>
            <person name="Gloux S."/>
            <person name="Godrie T."/>
            <person name="Goffeau A."/>
            <person name="Golding B."/>
            <person name="Gouzy J."/>
            <person name="Gurjal M."/>
            <person name="Hernandez-Lucas I."/>
            <person name="Hong A."/>
            <person name="Huizar L."/>
            <person name="Hyman R.W."/>
            <person name="Jones T."/>
            <person name="Kahn D."/>
            <person name="Kahn M.L."/>
            <person name="Kalman S."/>
            <person name="Keating D.H."/>
            <person name="Kiss E."/>
            <person name="Komp C."/>
            <person name="Lelaure V."/>
            <person name="Masuy D."/>
            <person name="Palm C."/>
            <person name="Peck M.C."/>
            <person name="Pohl T.M."/>
            <person name="Portetelle D."/>
            <person name="Purnelle B."/>
            <person name="Ramsperger U."/>
            <person name="Surzycki R."/>
            <person name="Thebault P."/>
            <person name="Vandenbol M."/>
            <person name="Vorhoelter F.J."/>
            <person name="Weidner S."/>
            <person name="Wells D.H."/>
            <person name="Wong K."/>
            <person name="Yeh K.-C."/>
            <person name="Batut J."/>
        </authorList>
    </citation>
    <scope>NUCLEOTIDE SEQUENCE [LARGE SCALE GENOMIC DNA]</scope>
    <source>
        <strain>1021</strain>
    </source>
</reference>
<gene>
    <name type="primary">exoT</name>
    <name type="ordered locus">RB1074</name>
    <name type="ORF">SMb20950</name>
</gene>
<accession>P33699</accession>
<sequence length="494" mass="53316">MTPTVNAKTVTRNVGWSVLSKTGTFGLKFVTVPILARILSPEEFGAVAVALTVVQFLAMIGGAGLTSALVIQQHEEMETVHSVFWANLAIALMMALGLFVFAEPLATLLGAPEAAYLLRIMSLLIPLQLGGDVAYSLLVRRMNFRKDAVWSMISESLGAVIAVLLALLGFGIWSLLAQLFVSALVRLSGLYAVSRYAPRFVFSLQRVLALSRFSFGMMGSEIANFITFQSPMVVISRYLGLSDAGAYSAANRFASIPNQVVLSAVMGVLFPTFGQMMHDRERRSQALMLSTQVTTVLLAPMMFGLWALAEPAMLVLFGSQWAYAWPVLGLLALSKGILTPCSTFIPYLKGVGQGAVLFWWALIRAVATTGAVAYGAIDGSLVEAMIWLCIVNAVTLVGYSWVVFRADSTPFLKGLFISSRPMIAALLMALVVRFLLEHFGAHVPNAVLQLIAGTAIGSVIYTVLILLTERSLLRRLLDMARARKPRAAPAGAAE</sequence>
<evidence type="ECO:0000255" key="1"/>
<evidence type="ECO:0000305" key="2"/>
<organism>
    <name type="scientific">Rhizobium meliloti (strain 1021)</name>
    <name type="common">Ensifer meliloti</name>
    <name type="synonym">Sinorhizobium meliloti</name>
    <dbReference type="NCBI Taxonomy" id="266834"/>
    <lineage>
        <taxon>Bacteria</taxon>
        <taxon>Pseudomonadati</taxon>
        <taxon>Pseudomonadota</taxon>
        <taxon>Alphaproteobacteria</taxon>
        <taxon>Hyphomicrobiales</taxon>
        <taxon>Rhizobiaceae</taxon>
        <taxon>Sinorhizobium/Ensifer group</taxon>
        <taxon>Sinorhizobium</taxon>
    </lineage>
</organism>
<keyword id="KW-1003">Cell membrane</keyword>
<keyword id="KW-0270">Exopolysaccharide synthesis</keyword>
<keyword id="KW-0472">Membrane</keyword>
<keyword id="KW-0614">Plasmid</keyword>
<keyword id="KW-1185">Reference proteome</keyword>
<keyword id="KW-0812">Transmembrane</keyword>
<keyword id="KW-1133">Transmembrane helix</keyword>
<feature type="chain" id="PRO_0000166447" description="Succinoglycan biosynthesis transport protein ExoT">
    <location>
        <begin position="1"/>
        <end position="494"/>
    </location>
</feature>
<feature type="transmembrane region" description="Helical" evidence="1">
    <location>
        <begin position="16"/>
        <end position="36"/>
    </location>
</feature>
<feature type="transmembrane region" description="Helical" evidence="1">
    <location>
        <begin position="44"/>
        <end position="64"/>
    </location>
</feature>
<feature type="transmembrane region" description="Helical" evidence="1">
    <location>
        <begin position="82"/>
        <end position="102"/>
    </location>
</feature>
<feature type="transmembrane region" description="Helical" evidence="1">
    <location>
        <begin position="105"/>
        <end position="125"/>
    </location>
</feature>
<feature type="transmembrane region" description="Helical" evidence="1">
    <location>
        <begin position="157"/>
        <end position="177"/>
    </location>
</feature>
<feature type="transmembrane region" description="Helical" evidence="1">
    <location>
        <begin position="215"/>
        <end position="235"/>
    </location>
</feature>
<feature type="transmembrane region" description="Helical" evidence="1">
    <location>
        <begin position="253"/>
        <end position="273"/>
    </location>
</feature>
<feature type="transmembrane region" description="Helical" evidence="1">
    <location>
        <begin position="297"/>
        <end position="317"/>
    </location>
</feature>
<feature type="transmembrane region" description="Helical" evidence="1">
    <location>
        <begin position="321"/>
        <end position="341"/>
    </location>
</feature>
<feature type="transmembrane region" description="Helical" evidence="1">
    <location>
        <begin position="343"/>
        <end position="363"/>
    </location>
</feature>
<feature type="transmembrane region" description="Helical" evidence="1">
    <location>
        <begin position="384"/>
        <end position="404"/>
    </location>
</feature>
<feature type="transmembrane region" description="Helical" evidence="1">
    <location>
        <begin position="421"/>
        <end position="441"/>
    </location>
</feature>
<feature type="transmembrane region" description="Helical" evidence="1">
    <location>
        <begin position="447"/>
        <end position="467"/>
    </location>
</feature>
<protein>
    <recommendedName>
        <fullName>Succinoglycan biosynthesis transport protein ExoT</fullName>
    </recommendedName>
</protein>
<comment type="pathway">
    <text>Glycan metabolism; exopolysaccharide biosynthesis.</text>
</comment>
<comment type="subcellular location">
    <subcellularLocation>
        <location evidence="2">Cell membrane</location>
        <topology evidence="2">Multi-pass membrane protein</topology>
    </subcellularLocation>
</comment>
<comment type="similarity">
    <text evidence="2">Belongs to the polysaccharide synthase family.</text>
</comment>
<name>EXOT_RHIME</name>